<sequence length="198" mass="23171">MAEKESTKRNRREEILQALAQMLESSDGSQRITTAKLAANVGVSEAALYRHFPSKTRMFDSLIEFIEDSLTTRINLILQDEKETFNRLRLILLLILGFAERNPGLTRIMTGHALMFEQDRLQDRINQLFERIESQLRQVLREHKLRDGKGFQHDETLLASQLLAFCEGMLSRFIRSEFRYRPTQEFDTRWPLLAAQLN</sequence>
<accession>C6DIC4</accession>
<proteinExistence type="inferred from homology"/>
<evidence type="ECO:0000255" key="1">
    <source>
        <dbReference type="HAMAP-Rule" id="MF_01839"/>
    </source>
</evidence>
<keyword id="KW-0131">Cell cycle</keyword>
<keyword id="KW-0132">Cell division</keyword>
<keyword id="KW-0175">Coiled coil</keyword>
<keyword id="KW-0963">Cytoplasm</keyword>
<keyword id="KW-0238">DNA-binding</keyword>
<dbReference type="EMBL" id="CP001657">
    <property type="protein sequence ID" value="ACT15118.1"/>
    <property type="molecule type" value="Genomic_DNA"/>
</dbReference>
<dbReference type="RefSeq" id="WP_015842192.1">
    <property type="nucleotide sequence ID" value="NC_012917.1"/>
</dbReference>
<dbReference type="SMR" id="C6DIC4"/>
<dbReference type="STRING" id="561230.PC1_4103"/>
<dbReference type="GeneID" id="67796091"/>
<dbReference type="KEGG" id="pct:PC1_4103"/>
<dbReference type="eggNOG" id="COG1309">
    <property type="taxonomic scope" value="Bacteria"/>
</dbReference>
<dbReference type="HOGENOM" id="CLU_069356_5_0_6"/>
<dbReference type="OrthoDB" id="9179041at2"/>
<dbReference type="Proteomes" id="UP000002736">
    <property type="component" value="Chromosome"/>
</dbReference>
<dbReference type="GO" id="GO:0043590">
    <property type="term" value="C:bacterial nucleoid"/>
    <property type="evidence" value="ECO:0007669"/>
    <property type="project" value="UniProtKB-UniRule"/>
</dbReference>
<dbReference type="GO" id="GO:0005737">
    <property type="term" value="C:cytoplasm"/>
    <property type="evidence" value="ECO:0007669"/>
    <property type="project" value="UniProtKB-UniRule"/>
</dbReference>
<dbReference type="GO" id="GO:0003700">
    <property type="term" value="F:DNA-binding transcription factor activity"/>
    <property type="evidence" value="ECO:0007669"/>
    <property type="project" value="TreeGrafter"/>
</dbReference>
<dbReference type="GO" id="GO:0000976">
    <property type="term" value="F:transcription cis-regulatory region binding"/>
    <property type="evidence" value="ECO:0007669"/>
    <property type="project" value="TreeGrafter"/>
</dbReference>
<dbReference type="GO" id="GO:0051301">
    <property type="term" value="P:cell division"/>
    <property type="evidence" value="ECO:0007669"/>
    <property type="project" value="UniProtKB-KW"/>
</dbReference>
<dbReference type="GO" id="GO:0010974">
    <property type="term" value="P:negative regulation of division septum assembly"/>
    <property type="evidence" value="ECO:0007669"/>
    <property type="project" value="InterPro"/>
</dbReference>
<dbReference type="FunFam" id="1.10.357.10:FF:000002">
    <property type="entry name" value="Nucleoid occlusion factor SlmA"/>
    <property type="match status" value="1"/>
</dbReference>
<dbReference type="Gene3D" id="1.10.357.10">
    <property type="entry name" value="Tetracycline Repressor, domain 2"/>
    <property type="match status" value="1"/>
</dbReference>
<dbReference type="HAMAP" id="MF_01839">
    <property type="entry name" value="NO_factor_SlmA"/>
    <property type="match status" value="1"/>
</dbReference>
<dbReference type="InterPro" id="IPR023772">
    <property type="entry name" value="DNA-bd_HTH_TetR-type_CS"/>
</dbReference>
<dbReference type="InterPro" id="IPR009057">
    <property type="entry name" value="Homeodomain-like_sf"/>
</dbReference>
<dbReference type="InterPro" id="IPR050109">
    <property type="entry name" value="HTH-type_TetR-like_transc_reg"/>
</dbReference>
<dbReference type="InterPro" id="IPR001647">
    <property type="entry name" value="HTH_TetR"/>
</dbReference>
<dbReference type="InterPro" id="IPR023769">
    <property type="entry name" value="NO_SlmA"/>
</dbReference>
<dbReference type="InterPro" id="IPR054580">
    <property type="entry name" value="SlmA-like_C"/>
</dbReference>
<dbReference type="InterPro" id="IPR036271">
    <property type="entry name" value="Tet_transcr_reg_TetR-rel_C_sf"/>
</dbReference>
<dbReference type="NCBIfam" id="NF007015">
    <property type="entry name" value="PRK09480.1"/>
    <property type="match status" value="1"/>
</dbReference>
<dbReference type="PANTHER" id="PTHR30055">
    <property type="entry name" value="HTH-TYPE TRANSCRIPTIONAL REGULATOR RUTR"/>
    <property type="match status" value="1"/>
</dbReference>
<dbReference type="PANTHER" id="PTHR30055:SF183">
    <property type="entry name" value="NUCLEOID OCCLUSION FACTOR SLMA"/>
    <property type="match status" value="1"/>
</dbReference>
<dbReference type="Pfam" id="PF22276">
    <property type="entry name" value="SlmA-like_C"/>
    <property type="match status" value="1"/>
</dbReference>
<dbReference type="Pfam" id="PF00440">
    <property type="entry name" value="TetR_N"/>
    <property type="match status" value="1"/>
</dbReference>
<dbReference type="SUPFAM" id="SSF46689">
    <property type="entry name" value="Homeodomain-like"/>
    <property type="match status" value="1"/>
</dbReference>
<dbReference type="SUPFAM" id="SSF48498">
    <property type="entry name" value="Tetracyclin repressor-like, C-terminal domain"/>
    <property type="match status" value="1"/>
</dbReference>
<dbReference type="PROSITE" id="PS01081">
    <property type="entry name" value="HTH_TETR_1"/>
    <property type="match status" value="1"/>
</dbReference>
<dbReference type="PROSITE" id="PS50977">
    <property type="entry name" value="HTH_TETR_2"/>
    <property type="match status" value="1"/>
</dbReference>
<name>SLMA_PECCP</name>
<feature type="chain" id="PRO_1000216093" description="Nucleoid occlusion factor SlmA">
    <location>
        <begin position="1"/>
        <end position="198"/>
    </location>
</feature>
<feature type="domain" description="HTH tetR-type" evidence="1">
    <location>
        <begin position="9"/>
        <end position="70"/>
    </location>
</feature>
<feature type="DNA-binding region" description="H-T-H motif" evidence="1">
    <location>
        <begin position="33"/>
        <end position="52"/>
    </location>
</feature>
<feature type="coiled-coil region" evidence="1">
    <location>
        <begin position="113"/>
        <end position="144"/>
    </location>
</feature>
<reference key="1">
    <citation type="submission" date="2009-07" db="EMBL/GenBank/DDBJ databases">
        <title>Complete sequence of Pectobacterium carotovorum subsp. carotovorum PC1.</title>
        <authorList>
            <consortium name="US DOE Joint Genome Institute"/>
            <person name="Lucas S."/>
            <person name="Copeland A."/>
            <person name="Lapidus A."/>
            <person name="Glavina del Rio T."/>
            <person name="Tice H."/>
            <person name="Bruce D."/>
            <person name="Goodwin L."/>
            <person name="Pitluck S."/>
            <person name="Munk A.C."/>
            <person name="Brettin T."/>
            <person name="Detter J.C."/>
            <person name="Han C."/>
            <person name="Tapia R."/>
            <person name="Larimer F."/>
            <person name="Land M."/>
            <person name="Hauser L."/>
            <person name="Kyrpides N."/>
            <person name="Mikhailova N."/>
            <person name="Balakrishnan V."/>
            <person name="Glasner J."/>
            <person name="Perna N.T."/>
        </authorList>
    </citation>
    <scope>NUCLEOTIDE SEQUENCE [LARGE SCALE GENOMIC DNA]</scope>
    <source>
        <strain>PC1</strain>
    </source>
</reference>
<organism>
    <name type="scientific">Pectobacterium carotovorum subsp. carotovorum (strain PC1)</name>
    <dbReference type="NCBI Taxonomy" id="561230"/>
    <lineage>
        <taxon>Bacteria</taxon>
        <taxon>Pseudomonadati</taxon>
        <taxon>Pseudomonadota</taxon>
        <taxon>Gammaproteobacteria</taxon>
        <taxon>Enterobacterales</taxon>
        <taxon>Pectobacteriaceae</taxon>
        <taxon>Pectobacterium</taxon>
    </lineage>
</organism>
<protein>
    <recommendedName>
        <fullName evidence="1">Nucleoid occlusion factor SlmA</fullName>
    </recommendedName>
</protein>
<comment type="function">
    <text evidence="1">Required for nucleoid occlusion (NO) phenomenon, which prevents Z-ring formation and cell division over the nucleoid. Acts as a DNA-associated cell division inhibitor that binds simultaneously chromosomal DNA and FtsZ, and disrupts the assembly of FtsZ polymers. SlmA-DNA-binding sequences (SBS) are dispersed on non-Ter regions of the chromosome, preventing FtsZ polymerization at these regions.</text>
</comment>
<comment type="subunit">
    <text evidence="1">Homodimer. Interacts with FtsZ.</text>
</comment>
<comment type="subcellular location">
    <subcellularLocation>
        <location evidence="1">Cytoplasm</location>
        <location evidence="1">Nucleoid</location>
    </subcellularLocation>
</comment>
<comment type="similarity">
    <text evidence="1">Belongs to the nucleoid occlusion factor SlmA family.</text>
</comment>
<gene>
    <name evidence="1" type="primary">slmA</name>
    <name type="ordered locus">PC1_4103</name>
</gene>